<feature type="chain" id="PRO_0000319832" description="3-isopropylmalate dehydratase large subunit">
    <location>
        <begin position="1"/>
        <end position="473"/>
    </location>
</feature>
<feature type="binding site" evidence="1">
    <location>
        <position position="354"/>
    </location>
    <ligand>
        <name>[4Fe-4S] cluster</name>
        <dbReference type="ChEBI" id="CHEBI:49883"/>
    </ligand>
</feature>
<feature type="binding site" evidence="1">
    <location>
        <position position="414"/>
    </location>
    <ligand>
        <name>[4Fe-4S] cluster</name>
        <dbReference type="ChEBI" id="CHEBI:49883"/>
    </ligand>
</feature>
<feature type="binding site" evidence="1">
    <location>
        <position position="417"/>
    </location>
    <ligand>
        <name>[4Fe-4S] cluster</name>
        <dbReference type="ChEBI" id="CHEBI:49883"/>
    </ligand>
</feature>
<sequence>MTDSKSAAPTTLYDKIWNDHLVHEADDGTCLLYIDRHLVHEVTSPQAFEGLRTAGRKVHAPEKTLAVVDHNVPTTDRSKPNPDPESADQIAALAENAREFGVTYYNEFDKRQGVVHVIGPEQGFTLPGTTIVCGDSHTSTHGAFGALAHGIGTSEVEHVLATQTLIQKKAKNMRVTVDGALPDGVTAKDIILAIIGEIGTAGGTGYVLEYAGSAIRALSMEGRMTVCNMSIEGGARAGLIAPDEKAYAYLKGRPMAPTGANWDAAMRYWETLRSDEGAHFDHELRLDAAALPPIVTWGTSPEDVISILGSVPNPADIADEAKRLSKERALAYMGLTAGTKITDIKIDRAFIGSCTNGRIEDLRAAAKVAEGKTVNGNVNAIIVPGSGLVKEQAEAEGLDKIFIAAGFEWREPGCSMCLAMNPDKLAPDERCASTSNRNFEGRQGFKGRTHLVSPAMAAAAAIAGHFVDIRDWR</sequence>
<proteinExistence type="inferred from homology"/>
<accession>Q21CT4</accession>
<name>LEUC_RHOPB</name>
<organism>
    <name type="scientific">Rhodopseudomonas palustris (strain BisB18)</name>
    <dbReference type="NCBI Taxonomy" id="316056"/>
    <lineage>
        <taxon>Bacteria</taxon>
        <taxon>Pseudomonadati</taxon>
        <taxon>Pseudomonadota</taxon>
        <taxon>Alphaproteobacteria</taxon>
        <taxon>Hyphomicrobiales</taxon>
        <taxon>Nitrobacteraceae</taxon>
        <taxon>Rhodopseudomonas</taxon>
    </lineage>
</organism>
<comment type="function">
    <text evidence="1">Catalyzes the isomerization between 2-isopropylmalate and 3-isopropylmalate, via the formation of 2-isopropylmaleate.</text>
</comment>
<comment type="catalytic activity">
    <reaction evidence="1">
        <text>(2R,3S)-3-isopropylmalate = (2S)-2-isopropylmalate</text>
        <dbReference type="Rhea" id="RHEA:32287"/>
        <dbReference type="ChEBI" id="CHEBI:1178"/>
        <dbReference type="ChEBI" id="CHEBI:35121"/>
        <dbReference type="EC" id="4.2.1.33"/>
    </reaction>
</comment>
<comment type="cofactor">
    <cofactor evidence="1">
        <name>[4Fe-4S] cluster</name>
        <dbReference type="ChEBI" id="CHEBI:49883"/>
    </cofactor>
    <text evidence="1">Binds 1 [4Fe-4S] cluster per subunit.</text>
</comment>
<comment type="pathway">
    <text evidence="1">Amino-acid biosynthesis; L-leucine biosynthesis; L-leucine from 3-methyl-2-oxobutanoate: step 2/4.</text>
</comment>
<comment type="subunit">
    <text evidence="1">Heterodimer of LeuC and LeuD.</text>
</comment>
<comment type="similarity">
    <text evidence="1">Belongs to the aconitase/IPM isomerase family. LeuC type 1 subfamily.</text>
</comment>
<evidence type="ECO:0000255" key="1">
    <source>
        <dbReference type="HAMAP-Rule" id="MF_01026"/>
    </source>
</evidence>
<reference key="1">
    <citation type="submission" date="2006-03" db="EMBL/GenBank/DDBJ databases">
        <title>Complete sequence of Rhodopseudomonas palustris BisB18.</title>
        <authorList>
            <consortium name="US DOE Joint Genome Institute"/>
            <person name="Copeland A."/>
            <person name="Lucas S."/>
            <person name="Lapidus A."/>
            <person name="Barry K."/>
            <person name="Detter J.C."/>
            <person name="Glavina del Rio T."/>
            <person name="Hammon N."/>
            <person name="Israni S."/>
            <person name="Dalin E."/>
            <person name="Tice H."/>
            <person name="Pitluck S."/>
            <person name="Chain P."/>
            <person name="Malfatti S."/>
            <person name="Shin M."/>
            <person name="Vergez L."/>
            <person name="Schmutz J."/>
            <person name="Larimer F."/>
            <person name="Land M."/>
            <person name="Hauser L."/>
            <person name="Pelletier D.A."/>
            <person name="Kyrpides N."/>
            <person name="Anderson I."/>
            <person name="Oda Y."/>
            <person name="Harwood C.S."/>
            <person name="Richardson P."/>
        </authorList>
    </citation>
    <scope>NUCLEOTIDE SEQUENCE [LARGE SCALE GENOMIC DNA]</scope>
    <source>
        <strain>BisB18</strain>
    </source>
</reference>
<dbReference type="EC" id="4.2.1.33" evidence="1"/>
<dbReference type="EMBL" id="CP000301">
    <property type="protein sequence ID" value="ABD85802.1"/>
    <property type="molecule type" value="Genomic_DNA"/>
</dbReference>
<dbReference type="SMR" id="Q21CT4"/>
<dbReference type="STRING" id="316056.RPC_0227"/>
<dbReference type="KEGG" id="rpc:RPC_0227"/>
<dbReference type="eggNOG" id="COG0065">
    <property type="taxonomic scope" value="Bacteria"/>
</dbReference>
<dbReference type="HOGENOM" id="CLU_006714_3_4_5"/>
<dbReference type="OrthoDB" id="9802769at2"/>
<dbReference type="UniPathway" id="UPA00048">
    <property type="reaction ID" value="UER00071"/>
</dbReference>
<dbReference type="GO" id="GO:0003861">
    <property type="term" value="F:3-isopropylmalate dehydratase activity"/>
    <property type="evidence" value="ECO:0007669"/>
    <property type="project" value="UniProtKB-UniRule"/>
</dbReference>
<dbReference type="GO" id="GO:0051539">
    <property type="term" value="F:4 iron, 4 sulfur cluster binding"/>
    <property type="evidence" value="ECO:0007669"/>
    <property type="project" value="UniProtKB-KW"/>
</dbReference>
<dbReference type="GO" id="GO:0046872">
    <property type="term" value="F:metal ion binding"/>
    <property type="evidence" value="ECO:0007669"/>
    <property type="project" value="UniProtKB-KW"/>
</dbReference>
<dbReference type="GO" id="GO:0009098">
    <property type="term" value="P:L-leucine biosynthetic process"/>
    <property type="evidence" value="ECO:0007669"/>
    <property type="project" value="UniProtKB-UniRule"/>
</dbReference>
<dbReference type="CDD" id="cd01583">
    <property type="entry name" value="IPMI"/>
    <property type="match status" value="1"/>
</dbReference>
<dbReference type="FunFam" id="3.30.499.10:FF:000007">
    <property type="entry name" value="3-isopropylmalate dehydratase large subunit"/>
    <property type="match status" value="1"/>
</dbReference>
<dbReference type="Gene3D" id="3.30.499.10">
    <property type="entry name" value="Aconitase, domain 3"/>
    <property type="match status" value="2"/>
</dbReference>
<dbReference type="HAMAP" id="MF_01026">
    <property type="entry name" value="LeuC_type1"/>
    <property type="match status" value="1"/>
</dbReference>
<dbReference type="InterPro" id="IPR004430">
    <property type="entry name" value="3-IsopropMal_deHydase_lsu"/>
</dbReference>
<dbReference type="InterPro" id="IPR015931">
    <property type="entry name" value="Acnase/IPM_dHydase_lsu_aba_1/3"/>
</dbReference>
<dbReference type="InterPro" id="IPR001030">
    <property type="entry name" value="Acoase/IPM_deHydtase_lsu_aba"/>
</dbReference>
<dbReference type="InterPro" id="IPR018136">
    <property type="entry name" value="Aconitase_4Fe-4S_BS"/>
</dbReference>
<dbReference type="InterPro" id="IPR036008">
    <property type="entry name" value="Aconitase_4Fe-4S_dom"/>
</dbReference>
<dbReference type="InterPro" id="IPR050067">
    <property type="entry name" value="IPM_dehydratase_rel_enz"/>
</dbReference>
<dbReference type="InterPro" id="IPR033941">
    <property type="entry name" value="IPMI_cat"/>
</dbReference>
<dbReference type="NCBIfam" id="TIGR00170">
    <property type="entry name" value="leuC"/>
    <property type="match status" value="1"/>
</dbReference>
<dbReference type="NCBIfam" id="NF004016">
    <property type="entry name" value="PRK05478.1"/>
    <property type="match status" value="1"/>
</dbReference>
<dbReference type="NCBIfam" id="NF009116">
    <property type="entry name" value="PRK12466.1"/>
    <property type="match status" value="1"/>
</dbReference>
<dbReference type="PANTHER" id="PTHR43822:SF9">
    <property type="entry name" value="3-ISOPROPYLMALATE DEHYDRATASE"/>
    <property type="match status" value="1"/>
</dbReference>
<dbReference type="PANTHER" id="PTHR43822">
    <property type="entry name" value="HOMOACONITASE, MITOCHONDRIAL-RELATED"/>
    <property type="match status" value="1"/>
</dbReference>
<dbReference type="Pfam" id="PF00330">
    <property type="entry name" value="Aconitase"/>
    <property type="match status" value="1"/>
</dbReference>
<dbReference type="PRINTS" id="PR00415">
    <property type="entry name" value="ACONITASE"/>
</dbReference>
<dbReference type="SUPFAM" id="SSF53732">
    <property type="entry name" value="Aconitase iron-sulfur domain"/>
    <property type="match status" value="1"/>
</dbReference>
<dbReference type="PROSITE" id="PS00450">
    <property type="entry name" value="ACONITASE_1"/>
    <property type="match status" value="1"/>
</dbReference>
<dbReference type="PROSITE" id="PS01244">
    <property type="entry name" value="ACONITASE_2"/>
    <property type="match status" value="1"/>
</dbReference>
<keyword id="KW-0004">4Fe-4S</keyword>
<keyword id="KW-0028">Amino-acid biosynthesis</keyword>
<keyword id="KW-0100">Branched-chain amino acid biosynthesis</keyword>
<keyword id="KW-0408">Iron</keyword>
<keyword id="KW-0411">Iron-sulfur</keyword>
<keyword id="KW-0432">Leucine biosynthesis</keyword>
<keyword id="KW-0456">Lyase</keyword>
<keyword id="KW-0479">Metal-binding</keyword>
<protein>
    <recommendedName>
        <fullName evidence="1">3-isopropylmalate dehydratase large subunit</fullName>
        <ecNumber evidence="1">4.2.1.33</ecNumber>
    </recommendedName>
    <alternativeName>
        <fullName evidence="1">Alpha-IPM isomerase</fullName>
        <shortName evidence="1">IPMI</shortName>
    </alternativeName>
    <alternativeName>
        <fullName evidence="1">Isopropylmalate isomerase</fullName>
    </alternativeName>
</protein>
<gene>
    <name evidence="1" type="primary">leuC</name>
    <name type="ordered locus">RPC_0227</name>
</gene>